<comment type="catalytic activity">
    <reaction evidence="1">
        <text>5-amino-1-(5-phospho-D-ribosyl)imidazole-4-carboxylate + L-aspartate + ATP = (2S)-2-[5-amino-1-(5-phospho-beta-D-ribosyl)imidazole-4-carboxamido]succinate + ADP + phosphate + 2 H(+)</text>
        <dbReference type="Rhea" id="RHEA:22628"/>
        <dbReference type="ChEBI" id="CHEBI:15378"/>
        <dbReference type="ChEBI" id="CHEBI:29991"/>
        <dbReference type="ChEBI" id="CHEBI:30616"/>
        <dbReference type="ChEBI" id="CHEBI:43474"/>
        <dbReference type="ChEBI" id="CHEBI:58443"/>
        <dbReference type="ChEBI" id="CHEBI:77657"/>
        <dbReference type="ChEBI" id="CHEBI:456216"/>
        <dbReference type="EC" id="6.3.2.6"/>
    </reaction>
</comment>
<comment type="pathway">
    <text evidence="1">Purine metabolism; IMP biosynthesis via de novo pathway; 5-amino-1-(5-phospho-D-ribosyl)imidazole-4-carboxamide from 5-amino-1-(5-phospho-D-ribosyl)imidazole-4-carboxylate: step 1/2.</text>
</comment>
<comment type="similarity">
    <text evidence="1">Belongs to the SAICAR synthetase family.</text>
</comment>
<evidence type="ECO:0000255" key="1">
    <source>
        <dbReference type="HAMAP-Rule" id="MF_00137"/>
    </source>
</evidence>
<accession>Q4J8G0</accession>
<name>PUR7_SULAC</name>
<dbReference type="EC" id="6.3.2.6" evidence="1"/>
<dbReference type="EMBL" id="CP000077">
    <property type="protein sequence ID" value="AAY80920.1"/>
    <property type="molecule type" value="Genomic_DNA"/>
</dbReference>
<dbReference type="RefSeq" id="WP_011278422.1">
    <property type="nucleotide sequence ID" value="NC_007181.1"/>
</dbReference>
<dbReference type="SMR" id="Q4J8G0"/>
<dbReference type="STRING" id="330779.Saci_1607"/>
<dbReference type="GeneID" id="14552100"/>
<dbReference type="GeneID" id="78441950"/>
<dbReference type="KEGG" id="sai:Saci_1607"/>
<dbReference type="PATRIC" id="fig|330779.12.peg.1546"/>
<dbReference type="eggNOG" id="arCOG04421">
    <property type="taxonomic scope" value="Archaea"/>
</dbReference>
<dbReference type="HOGENOM" id="CLU_061495_2_0_2"/>
<dbReference type="UniPathway" id="UPA00074">
    <property type="reaction ID" value="UER00131"/>
</dbReference>
<dbReference type="Proteomes" id="UP000001018">
    <property type="component" value="Chromosome"/>
</dbReference>
<dbReference type="GO" id="GO:0005524">
    <property type="term" value="F:ATP binding"/>
    <property type="evidence" value="ECO:0007669"/>
    <property type="project" value="UniProtKB-KW"/>
</dbReference>
<dbReference type="GO" id="GO:0004639">
    <property type="term" value="F:phosphoribosylaminoimidazolesuccinocarboxamide synthase activity"/>
    <property type="evidence" value="ECO:0007669"/>
    <property type="project" value="UniProtKB-UniRule"/>
</dbReference>
<dbReference type="GO" id="GO:0006189">
    <property type="term" value="P:'de novo' IMP biosynthetic process"/>
    <property type="evidence" value="ECO:0007669"/>
    <property type="project" value="UniProtKB-UniRule"/>
</dbReference>
<dbReference type="GO" id="GO:0009236">
    <property type="term" value="P:cobalamin biosynthetic process"/>
    <property type="evidence" value="ECO:0007669"/>
    <property type="project" value="InterPro"/>
</dbReference>
<dbReference type="CDD" id="cd01415">
    <property type="entry name" value="SAICAR_synt_PurC"/>
    <property type="match status" value="1"/>
</dbReference>
<dbReference type="Gene3D" id="3.30.470.20">
    <property type="entry name" value="ATP-grasp fold, B domain"/>
    <property type="match status" value="1"/>
</dbReference>
<dbReference type="Gene3D" id="3.30.200.20">
    <property type="entry name" value="Phosphorylase Kinase, domain 1"/>
    <property type="match status" value="1"/>
</dbReference>
<dbReference type="HAMAP" id="MF_00137">
    <property type="entry name" value="SAICAR_synth"/>
    <property type="match status" value="1"/>
</dbReference>
<dbReference type="InterPro" id="IPR028923">
    <property type="entry name" value="SAICAR_synt/ADE2_N"/>
</dbReference>
<dbReference type="InterPro" id="IPR033934">
    <property type="entry name" value="SAICAR_synt_PurC"/>
</dbReference>
<dbReference type="InterPro" id="IPR001636">
    <property type="entry name" value="SAICAR_synth"/>
</dbReference>
<dbReference type="InterPro" id="IPR050089">
    <property type="entry name" value="SAICAR_synthetase"/>
</dbReference>
<dbReference type="InterPro" id="IPR018236">
    <property type="entry name" value="SAICAR_synthetase_CS"/>
</dbReference>
<dbReference type="NCBIfam" id="TIGR00081">
    <property type="entry name" value="purC"/>
    <property type="match status" value="1"/>
</dbReference>
<dbReference type="PANTHER" id="PTHR43599">
    <property type="entry name" value="MULTIFUNCTIONAL PROTEIN ADE2"/>
    <property type="match status" value="1"/>
</dbReference>
<dbReference type="PANTHER" id="PTHR43599:SF3">
    <property type="entry name" value="SI:DKEY-6E2.2"/>
    <property type="match status" value="1"/>
</dbReference>
<dbReference type="Pfam" id="PF01259">
    <property type="entry name" value="SAICAR_synt"/>
    <property type="match status" value="1"/>
</dbReference>
<dbReference type="SUPFAM" id="SSF56104">
    <property type="entry name" value="SAICAR synthase-like"/>
    <property type="match status" value="1"/>
</dbReference>
<dbReference type="PROSITE" id="PS01057">
    <property type="entry name" value="SAICAR_SYNTHETASE_1"/>
    <property type="match status" value="1"/>
</dbReference>
<gene>
    <name evidence="1" type="primary">purC</name>
    <name type="ordered locus">Saci_1607</name>
</gene>
<sequence>MEPKRVAEGKTKIVYEFDPEHYLLRFKDSITAGDGARKDELPGKGTLNAQTSALFFRLLEKNDIRTHYVGMYDEKTMIVTKLKMIPVEVVLRNIATGSIVKRLPIKEGEVFDPPIVEFFLKDDLRHDPLLNYSHLQYFNLLTRKEAEIVEEVIVKVNAVMKNFLKERGLVLYDLKLEFGKDKDNNLIVGDEITLDSMRVRDEKTNKILDKDLYRKGESLEVVKKAYEDFFNLISR</sequence>
<reference key="1">
    <citation type="journal article" date="2005" name="J. Bacteriol.">
        <title>The genome of Sulfolobus acidocaldarius, a model organism of the Crenarchaeota.</title>
        <authorList>
            <person name="Chen L."/>
            <person name="Bruegger K."/>
            <person name="Skovgaard M."/>
            <person name="Redder P."/>
            <person name="She Q."/>
            <person name="Torarinsson E."/>
            <person name="Greve B."/>
            <person name="Awayez M."/>
            <person name="Zibat A."/>
            <person name="Klenk H.-P."/>
            <person name="Garrett R.A."/>
        </authorList>
    </citation>
    <scope>NUCLEOTIDE SEQUENCE [LARGE SCALE GENOMIC DNA]</scope>
    <source>
        <strain>ATCC 33909 / DSM 639 / JCM 8929 / NBRC 15157 / NCIMB 11770</strain>
    </source>
</reference>
<keyword id="KW-0067">ATP-binding</keyword>
<keyword id="KW-0436">Ligase</keyword>
<keyword id="KW-0547">Nucleotide-binding</keyword>
<keyword id="KW-0658">Purine biosynthesis</keyword>
<keyword id="KW-1185">Reference proteome</keyword>
<organism>
    <name type="scientific">Sulfolobus acidocaldarius (strain ATCC 33909 / DSM 639 / JCM 8929 / NBRC 15157 / NCIMB 11770)</name>
    <dbReference type="NCBI Taxonomy" id="330779"/>
    <lineage>
        <taxon>Archaea</taxon>
        <taxon>Thermoproteota</taxon>
        <taxon>Thermoprotei</taxon>
        <taxon>Sulfolobales</taxon>
        <taxon>Sulfolobaceae</taxon>
        <taxon>Sulfolobus</taxon>
    </lineage>
</organism>
<protein>
    <recommendedName>
        <fullName evidence="1">Phosphoribosylaminoimidazole-succinocarboxamide synthase</fullName>
        <ecNumber evidence="1">6.3.2.6</ecNumber>
    </recommendedName>
    <alternativeName>
        <fullName evidence="1">SAICAR synthetase</fullName>
    </alternativeName>
</protein>
<proteinExistence type="inferred from homology"/>
<feature type="chain" id="PRO_0000100918" description="Phosphoribosylaminoimidazole-succinocarboxamide synthase">
    <location>
        <begin position="1"/>
        <end position="235"/>
    </location>
</feature>